<comment type="cofactor">
    <cofactor evidence="1">
        <name>Fe(2+)</name>
        <dbReference type="ChEBI" id="CHEBI:29033"/>
    </cofactor>
    <text evidence="1">Binds 1 Fe(2+) ion per subunit.</text>
</comment>
<comment type="cofactor">
    <cofactor evidence="1">
        <name>L-ascorbate</name>
        <dbReference type="ChEBI" id="CHEBI:38290"/>
    </cofactor>
</comment>
<protein>
    <recommendedName>
        <fullName evidence="1">PKHD-type hydroxylase YbiX</fullName>
        <ecNumber evidence="1">1.14.11.-</ecNumber>
    </recommendedName>
</protein>
<proteinExistence type="inferred from homology"/>
<gene>
    <name evidence="1" type="primary">ybiX</name>
    <name type="ordered locus">ECH74115_0953</name>
</gene>
<feature type="chain" id="PRO_1000131210" description="PKHD-type hydroxylase YbiX">
    <location>
        <begin position="1"/>
        <end position="228"/>
    </location>
</feature>
<feature type="domain" description="Fe2OG dioxygenase" evidence="1">
    <location>
        <begin position="78"/>
        <end position="177"/>
    </location>
</feature>
<feature type="binding site" evidence="1">
    <location>
        <position position="96"/>
    </location>
    <ligand>
        <name>Fe cation</name>
        <dbReference type="ChEBI" id="CHEBI:24875"/>
    </ligand>
</feature>
<feature type="binding site" evidence="1">
    <location>
        <position position="98"/>
    </location>
    <ligand>
        <name>Fe cation</name>
        <dbReference type="ChEBI" id="CHEBI:24875"/>
    </ligand>
</feature>
<feature type="binding site" evidence="1">
    <location>
        <position position="158"/>
    </location>
    <ligand>
        <name>Fe cation</name>
        <dbReference type="ChEBI" id="CHEBI:24875"/>
    </ligand>
</feature>
<feature type="binding site" evidence="1">
    <location>
        <position position="168"/>
    </location>
    <ligand>
        <name>2-oxoglutarate</name>
        <dbReference type="ChEBI" id="CHEBI:16810"/>
    </ligand>
</feature>
<evidence type="ECO:0000255" key="1">
    <source>
        <dbReference type="HAMAP-Rule" id="MF_00657"/>
    </source>
</evidence>
<accession>B5YS96</accession>
<sequence length="228" mass="25907">MMYHIPGVLSPQDVARFREQLEQAEWVDGRVTTGAQGAQVKNNQQVDTRSTLYAALQNEVLNAVNQHALFFAAALPRTLSTPLFNRYQNNETYGFHVDGAVRSHPQNGWMRTDLSATLFLSDPQSYDGGELVVNDTFGQHRVKLPAGDLVLYPSSSLHCVTPVTRGVRVASFIWIQSMIRDDKKRAMLFELDKNIQNIQSLKSRYGENEEILSLLNLYHNLLREWSEI</sequence>
<keyword id="KW-0223">Dioxygenase</keyword>
<keyword id="KW-0408">Iron</keyword>
<keyword id="KW-0479">Metal-binding</keyword>
<keyword id="KW-0560">Oxidoreductase</keyword>
<keyword id="KW-0847">Vitamin C</keyword>
<reference key="1">
    <citation type="journal article" date="2011" name="Proc. Natl. Acad. Sci. U.S.A.">
        <title>Genomic anatomy of Escherichia coli O157:H7 outbreaks.</title>
        <authorList>
            <person name="Eppinger M."/>
            <person name="Mammel M.K."/>
            <person name="Leclerc J.E."/>
            <person name="Ravel J."/>
            <person name="Cebula T.A."/>
        </authorList>
    </citation>
    <scope>NUCLEOTIDE SEQUENCE [LARGE SCALE GENOMIC DNA]</scope>
    <source>
        <strain>EC4115 / EHEC</strain>
    </source>
</reference>
<dbReference type="EC" id="1.14.11.-" evidence="1"/>
<dbReference type="EMBL" id="CP001164">
    <property type="protein sequence ID" value="ACI37284.1"/>
    <property type="molecule type" value="Genomic_DNA"/>
</dbReference>
<dbReference type="RefSeq" id="WP_000990173.1">
    <property type="nucleotide sequence ID" value="NC_011353.1"/>
</dbReference>
<dbReference type="SMR" id="B5YS96"/>
<dbReference type="KEGG" id="ecf:ECH74115_0953"/>
<dbReference type="HOGENOM" id="CLU_106663_0_0_6"/>
<dbReference type="GO" id="GO:0016706">
    <property type="term" value="F:2-oxoglutarate-dependent dioxygenase activity"/>
    <property type="evidence" value="ECO:0007669"/>
    <property type="project" value="UniProtKB-UniRule"/>
</dbReference>
<dbReference type="GO" id="GO:0005506">
    <property type="term" value="F:iron ion binding"/>
    <property type="evidence" value="ECO:0007669"/>
    <property type="project" value="UniProtKB-UniRule"/>
</dbReference>
<dbReference type="GO" id="GO:0031418">
    <property type="term" value="F:L-ascorbic acid binding"/>
    <property type="evidence" value="ECO:0007669"/>
    <property type="project" value="UniProtKB-KW"/>
</dbReference>
<dbReference type="GO" id="GO:0006974">
    <property type="term" value="P:DNA damage response"/>
    <property type="evidence" value="ECO:0007669"/>
    <property type="project" value="TreeGrafter"/>
</dbReference>
<dbReference type="GO" id="GO:0006879">
    <property type="term" value="P:intracellular iron ion homeostasis"/>
    <property type="evidence" value="ECO:0007669"/>
    <property type="project" value="TreeGrafter"/>
</dbReference>
<dbReference type="FunFam" id="2.60.120.620:FF:000006">
    <property type="entry name" value="PKHD-type hydroxylase YbiX"/>
    <property type="match status" value="1"/>
</dbReference>
<dbReference type="FunFam" id="4.10.860.20:FF:000001">
    <property type="entry name" value="PKHD-type hydroxylase YbiX"/>
    <property type="match status" value="1"/>
</dbReference>
<dbReference type="Gene3D" id="2.60.120.620">
    <property type="entry name" value="q2cbj1_9rhob like domain"/>
    <property type="match status" value="1"/>
</dbReference>
<dbReference type="Gene3D" id="4.10.860.20">
    <property type="entry name" value="Rabenosyn, Rab binding domain"/>
    <property type="match status" value="1"/>
</dbReference>
<dbReference type="HAMAP" id="MF_00657">
    <property type="entry name" value="Hydroxyl_YbiX"/>
    <property type="match status" value="1"/>
</dbReference>
<dbReference type="InterPro" id="IPR005123">
    <property type="entry name" value="Oxoglu/Fe-dep_dioxygenase_dom"/>
</dbReference>
<dbReference type="InterPro" id="IPR041097">
    <property type="entry name" value="PKHD_C"/>
</dbReference>
<dbReference type="InterPro" id="IPR023550">
    <property type="entry name" value="PKHD_hydroxylase"/>
</dbReference>
<dbReference type="InterPro" id="IPR006620">
    <property type="entry name" value="Pro_4_hyd_alph"/>
</dbReference>
<dbReference type="InterPro" id="IPR044862">
    <property type="entry name" value="Pro_4_hyd_alph_FE2OG_OXY"/>
</dbReference>
<dbReference type="NCBIfam" id="NF003972">
    <property type="entry name" value="PRK05467.1-1"/>
    <property type="match status" value="1"/>
</dbReference>
<dbReference type="NCBIfam" id="NF003974">
    <property type="entry name" value="PRK05467.1-3"/>
    <property type="match status" value="1"/>
</dbReference>
<dbReference type="NCBIfam" id="NF003975">
    <property type="entry name" value="PRK05467.1-4"/>
    <property type="match status" value="1"/>
</dbReference>
<dbReference type="PANTHER" id="PTHR41536">
    <property type="entry name" value="PKHD-TYPE HYDROXYLASE YBIX"/>
    <property type="match status" value="1"/>
</dbReference>
<dbReference type="PANTHER" id="PTHR41536:SF1">
    <property type="entry name" value="PKHD-TYPE HYDROXYLASE YBIX"/>
    <property type="match status" value="1"/>
</dbReference>
<dbReference type="Pfam" id="PF13640">
    <property type="entry name" value="2OG-FeII_Oxy_3"/>
    <property type="match status" value="1"/>
</dbReference>
<dbReference type="Pfam" id="PF18331">
    <property type="entry name" value="PKHD_C"/>
    <property type="match status" value="1"/>
</dbReference>
<dbReference type="SMART" id="SM00702">
    <property type="entry name" value="P4Hc"/>
    <property type="match status" value="1"/>
</dbReference>
<dbReference type="SUPFAM" id="SSF51197">
    <property type="entry name" value="Clavaminate synthase-like"/>
    <property type="match status" value="1"/>
</dbReference>
<dbReference type="PROSITE" id="PS51471">
    <property type="entry name" value="FE2OG_OXY"/>
    <property type="match status" value="1"/>
</dbReference>
<organism>
    <name type="scientific">Escherichia coli O157:H7 (strain EC4115 / EHEC)</name>
    <dbReference type="NCBI Taxonomy" id="444450"/>
    <lineage>
        <taxon>Bacteria</taxon>
        <taxon>Pseudomonadati</taxon>
        <taxon>Pseudomonadota</taxon>
        <taxon>Gammaproteobacteria</taxon>
        <taxon>Enterobacterales</taxon>
        <taxon>Enterobacteriaceae</taxon>
        <taxon>Escherichia</taxon>
    </lineage>
</organism>
<name>YBIX_ECO5E</name>